<comment type="function">
    <text evidence="1">One of the primary rRNA binding proteins. Required for association of the 30S and 50S subunits to form the 70S ribosome, for tRNA binding and peptide bond formation. It has been suggested to have peptidyltransferase activity; this is somewhat controversial. Makes several contacts with the 16S rRNA in the 70S ribosome.</text>
</comment>
<comment type="subunit">
    <text evidence="1">Part of the 50S ribosomal subunit. Forms a bridge to the 30S subunit in the 70S ribosome.</text>
</comment>
<comment type="similarity">
    <text evidence="1">Belongs to the universal ribosomal protein uL2 family.</text>
</comment>
<feature type="chain" id="PRO_1000067535" description="Large ribosomal subunit protein uL2">
    <location>
        <begin position="1"/>
        <end position="276"/>
    </location>
</feature>
<feature type="region of interest" description="Disordered" evidence="2">
    <location>
        <begin position="219"/>
        <end position="276"/>
    </location>
</feature>
<gene>
    <name evidence="1" type="primary">rplB</name>
    <name type="ordered locus">Amet_4475</name>
</gene>
<dbReference type="EMBL" id="CP000724">
    <property type="protein sequence ID" value="ABR50547.1"/>
    <property type="molecule type" value="Genomic_DNA"/>
</dbReference>
<dbReference type="RefSeq" id="WP_012065438.1">
    <property type="nucleotide sequence ID" value="NC_009633.1"/>
</dbReference>
<dbReference type="SMR" id="A6TWH9"/>
<dbReference type="STRING" id="293826.Amet_4475"/>
<dbReference type="KEGG" id="amt:Amet_4475"/>
<dbReference type="eggNOG" id="COG0090">
    <property type="taxonomic scope" value="Bacteria"/>
</dbReference>
<dbReference type="HOGENOM" id="CLU_036235_2_1_9"/>
<dbReference type="OrthoDB" id="9778722at2"/>
<dbReference type="Proteomes" id="UP000001572">
    <property type="component" value="Chromosome"/>
</dbReference>
<dbReference type="GO" id="GO:0015934">
    <property type="term" value="C:large ribosomal subunit"/>
    <property type="evidence" value="ECO:0007669"/>
    <property type="project" value="InterPro"/>
</dbReference>
<dbReference type="GO" id="GO:0019843">
    <property type="term" value="F:rRNA binding"/>
    <property type="evidence" value="ECO:0007669"/>
    <property type="project" value="UniProtKB-UniRule"/>
</dbReference>
<dbReference type="GO" id="GO:0003735">
    <property type="term" value="F:structural constituent of ribosome"/>
    <property type="evidence" value="ECO:0007669"/>
    <property type="project" value="InterPro"/>
</dbReference>
<dbReference type="GO" id="GO:0016740">
    <property type="term" value="F:transferase activity"/>
    <property type="evidence" value="ECO:0007669"/>
    <property type="project" value="InterPro"/>
</dbReference>
<dbReference type="GO" id="GO:0002181">
    <property type="term" value="P:cytoplasmic translation"/>
    <property type="evidence" value="ECO:0007669"/>
    <property type="project" value="TreeGrafter"/>
</dbReference>
<dbReference type="FunFam" id="2.30.30.30:FF:000001">
    <property type="entry name" value="50S ribosomal protein L2"/>
    <property type="match status" value="1"/>
</dbReference>
<dbReference type="FunFam" id="2.40.50.140:FF:000003">
    <property type="entry name" value="50S ribosomal protein L2"/>
    <property type="match status" value="1"/>
</dbReference>
<dbReference type="FunFam" id="4.10.950.10:FF:000001">
    <property type="entry name" value="50S ribosomal protein L2"/>
    <property type="match status" value="1"/>
</dbReference>
<dbReference type="Gene3D" id="2.30.30.30">
    <property type="match status" value="1"/>
</dbReference>
<dbReference type="Gene3D" id="2.40.50.140">
    <property type="entry name" value="Nucleic acid-binding proteins"/>
    <property type="match status" value="1"/>
</dbReference>
<dbReference type="Gene3D" id="4.10.950.10">
    <property type="entry name" value="Ribosomal protein L2, domain 3"/>
    <property type="match status" value="1"/>
</dbReference>
<dbReference type="HAMAP" id="MF_01320_B">
    <property type="entry name" value="Ribosomal_uL2_B"/>
    <property type="match status" value="1"/>
</dbReference>
<dbReference type="InterPro" id="IPR012340">
    <property type="entry name" value="NA-bd_OB-fold"/>
</dbReference>
<dbReference type="InterPro" id="IPR014722">
    <property type="entry name" value="Rib_uL2_dom2"/>
</dbReference>
<dbReference type="InterPro" id="IPR002171">
    <property type="entry name" value="Ribosomal_uL2"/>
</dbReference>
<dbReference type="InterPro" id="IPR005880">
    <property type="entry name" value="Ribosomal_uL2_bac/org-type"/>
</dbReference>
<dbReference type="InterPro" id="IPR022669">
    <property type="entry name" value="Ribosomal_uL2_C"/>
</dbReference>
<dbReference type="InterPro" id="IPR022671">
    <property type="entry name" value="Ribosomal_uL2_CS"/>
</dbReference>
<dbReference type="InterPro" id="IPR014726">
    <property type="entry name" value="Ribosomal_uL2_dom3"/>
</dbReference>
<dbReference type="InterPro" id="IPR022666">
    <property type="entry name" value="Ribosomal_uL2_RNA-bd_dom"/>
</dbReference>
<dbReference type="InterPro" id="IPR008991">
    <property type="entry name" value="Translation_prot_SH3-like_sf"/>
</dbReference>
<dbReference type="NCBIfam" id="TIGR01171">
    <property type="entry name" value="rplB_bact"/>
    <property type="match status" value="1"/>
</dbReference>
<dbReference type="PANTHER" id="PTHR13691:SF5">
    <property type="entry name" value="LARGE RIBOSOMAL SUBUNIT PROTEIN UL2M"/>
    <property type="match status" value="1"/>
</dbReference>
<dbReference type="PANTHER" id="PTHR13691">
    <property type="entry name" value="RIBOSOMAL PROTEIN L2"/>
    <property type="match status" value="1"/>
</dbReference>
<dbReference type="Pfam" id="PF00181">
    <property type="entry name" value="Ribosomal_L2"/>
    <property type="match status" value="1"/>
</dbReference>
<dbReference type="Pfam" id="PF03947">
    <property type="entry name" value="Ribosomal_L2_C"/>
    <property type="match status" value="1"/>
</dbReference>
<dbReference type="PIRSF" id="PIRSF002158">
    <property type="entry name" value="Ribosomal_L2"/>
    <property type="match status" value="1"/>
</dbReference>
<dbReference type="SMART" id="SM01383">
    <property type="entry name" value="Ribosomal_L2"/>
    <property type="match status" value="1"/>
</dbReference>
<dbReference type="SMART" id="SM01382">
    <property type="entry name" value="Ribosomal_L2_C"/>
    <property type="match status" value="1"/>
</dbReference>
<dbReference type="SUPFAM" id="SSF50249">
    <property type="entry name" value="Nucleic acid-binding proteins"/>
    <property type="match status" value="1"/>
</dbReference>
<dbReference type="SUPFAM" id="SSF50104">
    <property type="entry name" value="Translation proteins SH3-like domain"/>
    <property type="match status" value="1"/>
</dbReference>
<dbReference type="PROSITE" id="PS00467">
    <property type="entry name" value="RIBOSOMAL_L2"/>
    <property type="match status" value="1"/>
</dbReference>
<organism>
    <name type="scientific">Alkaliphilus metalliredigens (strain QYMF)</name>
    <dbReference type="NCBI Taxonomy" id="293826"/>
    <lineage>
        <taxon>Bacteria</taxon>
        <taxon>Bacillati</taxon>
        <taxon>Bacillota</taxon>
        <taxon>Clostridia</taxon>
        <taxon>Peptostreptococcales</taxon>
        <taxon>Natronincolaceae</taxon>
        <taxon>Alkaliphilus</taxon>
    </lineage>
</organism>
<keyword id="KW-1185">Reference proteome</keyword>
<keyword id="KW-0687">Ribonucleoprotein</keyword>
<keyword id="KW-0689">Ribosomal protein</keyword>
<keyword id="KW-0694">RNA-binding</keyword>
<keyword id="KW-0699">rRNA-binding</keyword>
<accession>A6TWH9</accession>
<reference key="1">
    <citation type="journal article" date="2016" name="Genome Announc.">
        <title>Complete genome sequence of Alkaliphilus metalliredigens strain QYMF, an alkaliphilic and metal-reducing bacterium isolated from borax-contaminated leachate ponds.</title>
        <authorList>
            <person name="Hwang C."/>
            <person name="Copeland A."/>
            <person name="Lucas S."/>
            <person name="Lapidus A."/>
            <person name="Barry K."/>
            <person name="Detter J.C."/>
            <person name="Glavina Del Rio T."/>
            <person name="Hammon N."/>
            <person name="Israni S."/>
            <person name="Dalin E."/>
            <person name="Tice H."/>
            <person name="Pitluck S."/>
            <person name="Chertkov O."/>
            <person name="Brettin T."/>
            <person name="Bruce D."/>
            <person name="Han C."/>
            <person name="Schmutz J."/>
            <person name="Larimer F."/>
            <person name="Land M.L."/>
            <person name="Hauser L."/>
            <person name="Kyrpides N."/>
            <person name="Mikhailova N."/>
            <person name="Ye Q."/>
            <person name="Zhou J."/>
            <person name="Richardson P."/>
            <person name="Fields M.W."/>
        </authorList>
    </citation>
    <scope>NUCLEOTIDE SEQUENCE [LARGE SCALE GENOMIC DNA]</scope>
    <source>
        <strain>QYMF</strain>
    </source>
</reference>
<proteinExistence type="inferred from homology"/>
<evidence type="ECO:0000255" key="1">
    <source>
        <dbReference type="HAMAP-Rule" id="MF_01320"/>
    </source>
</evidence>
<evidence type="ECO:0000256" key="2">
    <source>
        <dbReference type="SAM" id="MobiDB-lite"/>
    </source>
</evidence>
<evidence type="ECO:0000305" key="3"/>
<name>RL2_ALKMQ</name>
<protein>
    <recommendedName>
        <fullName evidence="1">Large ribosomal subunit protein uL2</fullName>
    </recommendedName>
    <alternativeName>
        <fullName evidence="3">50S ribosomal protein L2</fullName>
    </alternativeName>
</protein>
<sequence>MGIKKFRPTSPGVRQMTVSTFEEITKVDPEKSLLTPLSKSGGRNAHGKITVRHRGGGLKRHYRIIDFKRNKDDIPAKVASVEYDPNRTANIALLHYVDGEKRYIIAPKGLKVGEMIFSGPESDIKVGNALPLINIPVGTIIHNIEMKPGKGGQIARSAGNSAQLMAKEGRYALVRLPSGEVRQILIECRATIGQVGNLDHENVTIGKAGRKRKMGIRPTVRGSAMNPNDHPHGGGEGRSPIGRPSPVTPWGKPALGYKTRKKNKHSDKFIVTGRKR</sequence>